<accession>Q6AY37</accession>
<feature type="chain" id="PRO_0000311930" description="Melanoma-associated antigen B16">
    <location>
        <begin position="1"/>
        <end position="360"/>
    </location>
</feature>
<feature type="domain" description="MAGE" evidence="1">
    <location>
        <begin position="125"/>
        <end position="324"/>
    </location>
</feature>
<feature type="region of interest" description="Disordered" evidence="2">
    <location>
        <begin position="1"/>
        <end position="118"/>
    </location>
</feature>
<feature type="region of interest" description="Disordered" evidence="2">
    <location>
        <begin position="340"/>
        <end position="360"/>
    </location>
</feature>
<feature type="compositionally biased region" description="Basic and acidic residues" evidence="2">
    <location>
        <begin position="9"/>
        <end position="19"/>
    </location>
</feature>
<feature type="compositionally biased region" description="Polar residues" evidence="2">
    <location>
        <begin position="63"/>
        <end position="98"/>
    </location>
</feature>
<feature type="compositionally biased region" description="Low complexity" evidence="2">
    <location>
        <begin position="341"/>
        <end position="360"/>
    </location>
</feature>
<sequence>MSQKNPEYAADHDHTREEMQNLQVAPASSDVEEPCSSSHLMASSLKGHTSEETQVPEDMEEPCSSSQLLTASNQEDPAYETPSTSRGLQHPYVSSSESAKGLGNKEMQGNSVIPPDQPDLPVMTIDGKVNFLVNYMLYKYQVKEMMSMNDIMTLIVREDEHHFHEILMRASERMEMVFGLEVREVDPVNHFYALFIKLGLTYDGMRADEYSFPKTGLLILILGVVFMKGNRATEEEIWEVLNPMGIYAGMNHFIFGDPRELLTDDFVREQYLAYQPIANSDPIQYEYVWGPRAKAETSKMKVLEFVAKVHGSDPTVFPSQYEEALIEEEERTLAMILEQAGPSSASGESSSDMGSNVPHI</sequence>
<proteinExistence type="evidence at transcript level"/>
<reference key="1">
    <citation type="journal article" date="2004" name="Genome Res.">
        <title>The status, quality, and expansion of the NIH full-length cDNA project: the Mammalian Gene Collection (MGC).</title>
        <authorList>
            <consortium name="The MGC Project Team"/>
        </authorList>
    </citation>
    <scope>NUCLEOTIDE SEQUENCE [LARGE SCALE MRNA]</scope>
    <source>
        <tissue>Testis</tissue>
    </source>
</reference>
<evidence type="ECO:0000255" key="1">
    <source>
        <dbReference type="PROSITE-ProRule" id="PRU00127"/>
    </source>
</evidence>
<evidence type="ECO:0000256" key="2">
    <source>
        <dbReference type="SAM" id="MobiDB-lite"/>
    </source>
</evidence>
<keyword id="KW-1185">Reference proteome</keyword>
<keyword id="KW-0825">Tumor antigen</keyword>
<name>MAGBG_RAT</name>
<dbReference type="EMBL" id="BC079208">
    <property type="protein sequence ID" value="AAH79208.1"/>
    <property type="molecule type" value="mRNA"/>
</dbReference>
<dbReference type="RefSeq" id="NP_001020184.1">
    <property type="nucleotide sequence ID" value="NM_001025013.1"/>
</dbReference>
<dbReference type="RefSeq" id="XP_006257039.2">
    <property type="nucleotide sequence ID" value="XM_006256977.5"/>
</dbReference>
<dbReference type="RefSeq" id="XP_063136103.1">
    <property type="nucleotide sequence ID" value="XM_063280033.1"/>
</dbReference>
<dbReference type="RefSeq" id="XP_063136104.1">
    <property type="nucleotide sequence ID" value="XM_063280034.1"/>
</dbReference>
<dbReference type="RefSeq" id="XP_063136105.1">
    <property type="nucleotide sequence ID" value="XM_063280035.1"/>
</dbReference>
<dbReference type="SMR" id="Q6AY37"/>
<dbReference type="FunCoup" id="Q6AY37">
    <property type="interactions" value="7"/>
</dbReference>
<dbReference type="STRING" id="10116.ENSRNOP00000076053"/>
<dbReference type="PhosphoSitePlus" id="Q6AY37"/>
<dbReference type="jPOST" id="Q6AY37"/>
<dbReference type="PaxDb" id="10116-ENSRNOP00000064565"/>
<dbReference type="Ensembl" id="ENSRNOT00000042568.5">
    <property type="protein sequence ID" value="ENSRNOP00000064565.2"/>
    <property type="gene ID" value="ENSRNOG00000029408.6"/>
</dbReference>
<dbReference type="Ensembl" id="ENSRNOT00000092871.2">
    <property type="protein sequence ID" value="ENSRNOP00000076053.2"/>
    <property type="gene ID" value="ENSRNOG00000029408.6"/>
</dbReference>
<dbReference type="Ensembl" id="ENSRNOT00000116863.1">
    <property type="protein sequence ID" value="ENSRNOP00000097562.1"/>
    <property type="gene ID" value="ENSRNOG00000029408.6"/>
</dbReference>
<dbReference type="GeneID" id="317274"/>
<dbReference type="KEGG" id="rno:317274"/>
<dbReference type="AGR" id="RGD:1562365"/>
<dbReference type="CTD" id="139604"/>
<dbReference type="RGD" id="1562365">
    <property type="gene designation" value="Mageb16"/>
</dbReference>
<dbReference type="eggNOG" id="KOG4562">
    <property type="taxonomic scope" value="Eukaryota"/>
</dbReference>
<dbReference type="GeneTree" id="ENSGT00940000162825"/>
<dbReference type="InParanoid" id="Q6AY37"/>
<dbReference type="OMA" id="ECEDHFT"/>
<dbReference type="OrthoDB" id="205198at2759"/>
<dbReference type="PhylomeDB" id="Q6AY37"/>
<dbReference type="PRO" id="PR:Q6AY37"/>
<dbReference type="Proteomes" id="UP000002494">
    <property type="component" value="Chromosome X"/>
</dbReference>
<dbReference type="GO" id="GO:0005634">
    <property type="term" value="C:nucleus"/>
    <property type="evidence" value="ECO:0000318"/>
    <property type="project" value="GO_Central"/>
</dbReference>
<dbReference type="GO" id="GO:0000122">
    <property type="term" value="P:negative regulation of transcription by RNA polymerase II"/>
    <property type="evidence" value="ECO:0000318"/>
    <property type="project" value="GO_Central"/>
</dbReference>
<dbReference type="FunFam" id="1.10.10.1200:FF:000007">
    <property type="entry name" value="Melanoma-associated antigen C2"/>
    <property type="match status" value="1"/>
</dbReference>
<dbReference type="FunFam" id="1.10.10.1210:FF:000001">
    <property type="entry name" value="melanoma-associated antigen D1"/>
    <property type="match status" value="1"/>
</dbReference>
<dbReference type="Gene3D" id="1.10.10.1200">
    <property type="entry name" value="MAGE homology domain, winged helix WH1 motif"/>
    <property type="match status" value="1"/>
</dbReference>
<dbReference type="Gene3D" id="1.10.10.1210">
    <property type="entry name" value="MAGE homology domain, winged helix WH2 motif"/>
    <property type="match status" value="1"/>
</dbReference>
<dbReference type="InterPro" id="IPR037445">
    <property type="entry name" value="MAGE"/>
</dbReference>
<dbReference type="InterPro" id="IPR041898">
    <property type="entry name" value="MAGE_WH1"/>
</dbReference>
<dbReference type="InterPro" id="IPR041899">
    <property type="entry name" value="MAGE_WH2"/>
</dbReference>
<dbReference type="InterPro" id="IPR002190">
    <property type="entry name" value="MHD_dom"/>
</dbReference>
<dbReference type="PANTHER" id="PTHR11736:SF145">
    <property type="entry name" value="MELANOMA-ASSOCIATED ANTIGEN B16"/>
    <property type="match status" value="1"/>
</dbReference>
<dbReference type="PANTHER" id="PTHR11736">
    <property type="entry name" value="MELANOMA-ASSOCIATED ANTIGEN MAGE ANTIGEN"/>
    <property type="match status" value="1"/>
</dbReference>
<dbReference type="Pfam" id="PF01454">
    <property type="entry name" value="MAGE"/>
    <property type="match status" value="1"/>
</dbReference>
<dbReference type="SMART" id="SM01373">
    <property type="entry name" value="MAGE"/>
    <property type="match status" value="1"/>
</dbReference>
<dbReference type="PROSITE" id="PS50838">
    <property type="entry name" value="MAGE"/>
    <property type="match status" value="1"/>
</dbReference>
<organism>
    <name type="scientific">Rattus norvegicus</name>
    <name type="common">Rat</name>
    <dbReference type="NCBI Taxonomy" id="10116"/>
    <lineage>
        <taxon>Eukaryota</taxon>
        <taxon>Metazoa</taxon>
        <taxon>Chordata</taxon>
        <taxon>Craniata</taxon>
        <taxon>Vertebrata</taxon>
        <taxon>Euteleostomi</taxon>
        <taxon>Mammalia</taxon>
        <taxon>Eutheria</taxon>
        <taxon>Euarchontoglires</taxon>
        <taxon>Glires</taxon>
        <taxon>Rodentia</taxon>
        <taxon>Myomorpha</taxon>
        <taxon>Muroidea</taxon>
        <taxon>Muridae</taxon>
        <taxon>Murinae</taxon>
        <taxon>Rattus</taxon>
    </lineage>
</organism>
<gene>
    <name type="primary">Mageb16</name>
</gene>
<protein>
    <recommendedName>
        <fullName>Melanoma-associated antigen B16</fullName>
    </recommendedName>
    <alternativeName>
        <fullName>MAGE-B16 antigen</fullName>
    </alternativeName>
</protein>